<evidence type="ECO:0000269" key="1">
    <source>
    </source>
</evidence>
<evidence type="ECO:0000269" key="2">
    <source>
    </source>
</evidence>
<evidence type="ECO:0000269" key="3">
    <source>
    </source>
</evidence>
<evidence type="ECO:0000303" key="4">
    <source>
    </source>
</evidence>
<evidence type="ECO:0000303" key="5">
    <source>
    </source>
</evidence>
<evidence type="ECO:0000305" key="6"/>
<evidence type="ECO:0000305" key="7">
    <source>
    </source>
</evidence>
<evidence type="ECO:0000305" key="8">
    <source>
    </source>
</evidence>
<evidence type="ECO:0007829" key="9">
    <source>
        <dbReference type="PDB" id="4U3M"/>
    </source>
</evidence>
<evidence type="ECO:0007829" key="10">
    <source>
        <dbReference type="PDB" id="4U3U"/>
    </source>
</evidence>
<evidence type="ECO:0007829" key="11">
    <source>
        <dbReference type="PDB" id="4U4R"/>
    </source>
</evidence>
<dbReference type="EMBL" id="X60190">
    <property type="protein sequence ID" value="CAA42746.1"/>
    <property type="molecule type" value="Genomic_DNA"/>
</dbReference>
<dbReference type="EMBL" id="X99960">
    <property type="protein sequence ID" value="CAA68215.1"/>
    <property type="molecule type" value="Genomic_DNA"/>
</dbReference>
<dbReference type="EMBL" id="Z72669">
    <property type="protein sequence ID" value="CAA96859.1"/>
    <property type="molecule type" value="Genomic_DNA"/>
</dbReference>
<dbReference type="EMBL" id="BK006941">
    <property type="protein sequence ID" value="DAA07963.1"/>
    <property type="molecule type" value="Genomic_DNA"/>
</dbReference>
<dbReference type="PIR" id="S19077">
    <property type="entry name" value="R5BYL9"/>
</dbReference>
<dbReference type="RefSeq" id="NP_011368.3">
    <property type="nucleotide sequence ID" value="NM_001181012.3"/>
</dbReference>
<dbReference type="PDB" id="3J16">
    <property type="method" value="EM"/>
    <property type="chains" value="F=1-191"/>
</dbReference>
<dbReference type="PDB" id="3J6X">
    <property type="method" value="EM"/>
    <property type="resolution" value="6.10 A"/>
    <property type="chains" value="L9=1-191"/>
</dbReference>
<dbReference type="PDB" id="3J6Y">
    <property type="method" value="EM"/>
    <property type="resolution" value="6.10 A"/>
    <property type="chains" value="L9=1-191"/>
</dbReference>
<dbReference type="PDB" id="3J77">
    <property type="method" value="EM"/>
    <property type="resolution" value="6.20 A"/>
    <property type="chains" value="L9=1-191"/>
</dbReference>
<dbReference type="PDB" id="3J78">
    <property type="method" value="EM"/>
    <property type="resolution" value="6.30 A"/>
    <property type="chains" value="L9=1-191"/>
</dbReference>
<dbReference type="PDB" id="3JCT">
    <property type="method" value="EM"/>
    <property type="resolution" value="3.08 A"/>
    <property type="chains" value="H=1-191"/>
</dbReference>
<dbReference type="PDB" id="4U3M">
    <property type="method" value="X-ray"/>
    <property type="resolution" value="3.00 A"/>
    <property type="chains" value="L9/l9=1-191"/>
</dbReference>
<dbReference type="PDB" id="4U3N">
    <property type="method" value="X-ray"/>
    <property type="resolution" value="3.20 A"/>
    <property type="chains" value="L9/l9=1-191"/>
</dbReference>
<dbReference type="PDB" id="4U3U">
    <property type="method" value="X-ray"/>
    <property type="resolution" value="2.90 A"/>
    <property type="chains" value="L9/l9=1-191"/>
</dbReference>
<dbReference type="PDB" id="4U4N">
    <property type="method" value="X-ray"/>
    <property type="resolution" value="3.10 A"/>
    <property type="chains" value="L9/l9=1-191"/>
</dbReference>
<dbReference type="PDB" id="4U4O">
    <property type="method" value="X-ray"/>
    <property type="resolution" value="3.60 A"/>
    <property type="chains" value="L9/l9=1-191"/>
</dbReference>
<dbReference type="PDB" id="4U4Q">
    <property type="method" value="X-ray"/>
    <property type="resolution" value="3.00 A"/>
    <property type="chains" value="L9/l9=1-191"/>
</dbReference>
<dbReference type="PDB" id="4U4R">
    <property type="method" value="X-ray"/>
    <property type="resolution" value="2.80 A"/>
    <property type="chains" value="L9/l9=1-191"/>
</dbReference>
<dbReference type="PDB" id="4U4U">
    <property type="method" value="X-ray"/>
    <property type="resolution" value="3.00 A"/>
    <property type="chains" value="L9/l9=1-191"/>
</dbReference>
<dbReference type="PDB" id="4U4Y">
    <property type="method" value="X-ray"/>
    <property type="resolution" value="3.20 A"/>
    <property type="chains" value="L9/l9=1-191"/>
</dbReference>
<dbReference type="PDB" id="4U4Z">
    <property type="method" value="X-ray"/>
    <property type="resolution" value="3.10 A"/>
    <property type="chains" value="L9/l9=1-191"/>
</dbReference>
<dbReference type="PDB" id="4U50">
    <property type="method" value="X-ray"/>
    <property type="resolution" value="3.20 A"/>
    <property type="chains" value="L9/l9=1-191"/>
</dbReference>
<dbReference type="PDB" id="4U51">
    <property type="method" value="X-ray"/>
    <property type="resolution" value="3.20 A"/>
    <property type="chains" value="L9/l9=1-191"/>
</dbReference>
<dbReference type="PDB" id="4U52">
    <property type="method" value="X-ray"/>
    <property type="resolution" value="3.00 A"/>
    <property type="chains" value="L9/l9=1-191"/>
</dbReference>
<dbReference type="PDB" id="4U53">
    <property type="method" value="X-ray"/>
    <property type="resolution" value="3.30 A"/>
    <property type="chains" value="L9/l9=1-191"/>
</dbReference>
<dbReference type="PDB" id="4U55">
    <property type="method" value="X-ray"/>
    <property type="resolution" value="3.20 A"/>
    <property type="chains" value="L9/l9=1-191"/>
</dbReference>
<dbReference type="PDB" id="4U56">
    <property type="method" value="X-ray"/>
    <property type="resolution" value="3.45 A"/>
    <property type="chains" value="L9/l9=1-191"/>
</dbReference>
<dbReference type="PDB" id="4U6F">
    <property type="method" value="X-ray"/>
    <property type="resolution" value="3.10 A"/>
    <property type="chains" value="L9/l9=1-191"/>
</dbReference>
<dbReference type="PDB" id="4V4B">
    <property type="method" value="EM"/>
    <property type="resolution" value="11.70 A"/>
    <property type="chains" value="BH=1-191"/>
</dbReference>
<dbReference type="PDB" id="4V5Z">
    <property type="method" value="EM"/>
    <property type="resolution" value="8.70 A"/>
    <property type="chains" value="Be=1-189"/>
</dbReference>
<dbReference type="PDB" id="4V6I">
    <property type="method" value="EM"/>
    <property type="resolution" value="8.80 A"/>
    <property type="chains" value="BF=1-191"/>
</dbReference>
<dbReference type="PDB" id="4V7F">
    <property type="method" value="EM"/>
    <property type="resolution" value="8.70 A"/>
    <property type="chains" value="F=1-191"/>
</dbReference>
<dbReference type="PDB" id="4V7R">
    <property type="method" value="X-ray"/>
    <property type="resolution" value="4.00 A"/>
    <property type="chains" value="BI/DI=1-191"/>
</dbReference>
<dbReference type="PDB" id="4V88">
    <property type="method" value="X-ray"/>
    <property type="resolution" value="3.00 A"/>
    <property type="chains" value="BH/DH=1-191"/>
</dbReference>
<dbReference type="PDB" id="4V8T">
    <property type="method" value="EM"/>
    <property type="resolution" value="8.10 A"/>
    <property type="chains" value="H=1-191"/>
</dbReference>
<dbReference type="PDB" id="4V8Y">
    <property type="method" value="EM"/>
    <property type="resolution" value="4.30 A"/>
    <property type="chains" value="BH=1-191"/>
</dbReference>
<dbReference type="PDB" id="4V8Z">
    <property type="method" value="EM"/>
    <property type="resolution" value="6.60 A"/>
    <property type="chains" value="BH=1-191"/>
</dbReference>
<dbReference type="PDB" id="4V91">
    <property type="method" value="EM"/>
    <property type="resolution" value="3.70 A"/>
    <property type="chains" value="H=1-191"/>
</dbReference>
<dbReference type="PDB" id="5APN">
    <property type="method" value="EM"/>
    <property type="resolution" value="3.91 A"/>
    <property type="chains" value="H=1-191"/>
</dbReference>
<dbReference type="PDB" id="5APO">
    <property type="method" value="EM"/>
    <property type="resolution" value="3.41 A"/>
    <property type="chains" value="H=1-191"/>
</dbReference>
<dbReference type="PDB" id="5DAT">
    <property type="method" value="X-ray"/>
    <property type="resolution" value="3.15 A"/>
    <property type="chains" value="L9/l9=1-191"/>
</dbReference>
<dbReference type="PDB" id="5DC3">
    <property type="method" value="X-ray"/>
    <property type="resolution" value="3.25 A"/>
    <property type="chains" value="L9/l9=1-191"/>
</dbReference>
<dbReference type="PDB" id="5DGE">
    <property type="method" value="X-ray"/>
    <property type="resolution" value="3.45 A"/>
    <property type="chains" value="L9/l9=1-191"/>
</dbReference>
<dbReference type="PDB" id="5DGF">
    <property type="method" value="X-ray"/>
    <property type="resolution" value="3.30 A"/>
    <property type="chains" value="L9/l9=1-191"/>
</dbReference>
<dbReference type="PDB" id="5DGV">
    <property type="method" value="X-ray"/>
    <property type="resolution" value="3.10 A"/>
    <property type="chains" value="L9/l9=1-191"/>
</dbReference>
<dbReference type="PDB" id="5FCI">
    <property type="method" value="X-ray"/>
    <property type="resolution" value="3.40 A"/>
    <property type="chains" value="L9/l9=1-191"/>
</dbReference>
<dbReference type="PDB" id="5FCJ">
    <property type="method" value="X-ray"/>
    <property type="resolution" value="3.10 A"/>
    <property type="chains" value="L9/l9=1-191"/>
</dbReference>
<dbReference type="PDB" id="5GAK">
    <property type="method" value="EM"/>
    <property type="resolution" value="3.88 A"/>
    <property type="chains" value="L=1-191"/>
</dbReference>
<dbReference type="PDB" id="5H4P">
    <property type="method" value="EM"/>
    <property type="resolution" value="3.07 A"/>
    <property type="chains" value="H=1-191"/>
</dbReference>
<dbReference type="PDB" id="5I4L">
    <property type="method" value="X-ray"/>
    <property type="resolution" value="3.10 A"/>
    <property type="chains" value="L9/l9=1-191"/>
</dbReference>
<dbReference type="PDB" id="5JCS">
    <property type="method" value="EM"/>
    <property type="resolution" value="9.50 A"/>
    <property type="chains" value="H=1-191"/>
</dbReference>
<dbReference type="PDB" id="5JUO">
    <property type="method" value="EM"/>
    <property type="resolution" value="4.00 A"/>
    <property type="chains" value="M=1-191"/>
</dbReference>
<dbReference type="PDB" id="5JUP">
    <property type="method" value="EM"/>
    <property type="resolution" value="3.50 A"/>
    <property type="chains" value="M=1-191"/>
</dbReference>
<dbReference type="PDB" id="5JUS">
    <property type="method" value="EM"/>
    <property type="resolution" value="4.20 A"/>
    <property type="chains" value="M=1-191"/>
</dbReference>
<dbReference type="PDB" id="5JUT">
    <property type="method" value="EM"/>
    <property type="resolution" value="4.00 A"/>
    <property type="chains" value="M=1-191"/>
</dbReference>
<dbReference type="PDB" id="5JUU">
    <property type="method" value="EM"/>
    <property type="resolution" value="4.00 A"/>
    <property type="chains" value="M=1-191"/>
</dbReference>
<dbReference type="PDB" id="5LYB">
    <property type="method" value="X-ray"/>
    <property type="resolution" value="3.25 A"/>
    <property type="chains" value="L9/l9=1-191"/>
</dbReference>
<dbReference type="PDB" id="5M1J">
    <property type="method" value="EM"/>
    <property type="resolution" value="3.30 A"/>
    <property type="chains" value="H5=1-191"/>
</dbReference>
<dbReference type="PDB" id="5MC6">
    <property type="method" value="EM"/>
    <property type="resolution" value="3.80 A"/>
    <property type="chains" value="AD=1-191"/>
</dbReference>
<dbReference type="PDB" id="5MEI">
    <property type="method" value="X-ray"/>
    <property type="resolution" value="3.50 A"/>
    <property type="chains" value="CK/q=1-191"/>
</dbReference>
<dbReference type="PDB" id="5NDG">
    <property type="method" value="X-ray"/>
    <property type="resolution" value="3.70 A"/>
    <property type="chains" value="L9/l9=1-191"/>
</dbReference>
<dbReference type="PDB" id="5NDV">
    <property type="method" value="X-ray"/>
    <property type="resolution" value="3.30 A"/>
    <property type="chains" value="L9/l9=1-191"/>
</dbReference>
<dbReference type="PDB" id="5NDW">
    <property type="method" value="X-ray"/>
    <property type="resolution" value="3.70 A"/>
    <property type="chains" value="L9/l9=1-191"/>
</dbReference>
<dbReference type="PDB" id="5OBM">
    <property type="method" value="X-ray"/>
    <property type="resolution" value="3.40 A"/>
    <property type="chains" value="L9/l9=1-191"/>
</dbReference>
<dbReference type="PDB" id="5ON6">
    <property type="method" value="X-ray"/>
    <property type="resolution" value="3.10 A"/>
    <property type="chains" value="CK/q=1-191"/>
</dbReference>
<dbReference type="PDB" id="5T62">
    <property type="method" value="EM"/>
    <property type="resolution" value="3.30 A"/>
    <property type="chains" value="K=1-191"/>
</dbReference>
<dbReference type="PDB" id="5T6R">
    <property type="method" value="EM"/>
    <property type="resolution" value="4.50 A"/>
    <property type="chains" value="K=1-191"/>
</dbReference>
<dbReference type="PDB" id="5TBW">
    <property type="method" value="X-ray"/>
    <property type="resolution" value="3.00 A"/>
    <property type="chains" value="CK/q=1-191"/>
</dbReference>
<dbReference type="PDB" id="5TGA">
    <property type="method" value="X-ray"/>
    <property type="resolution" value="3.30 A"/>
    <property type="chains" value="L9/l9=1-191"/>
</dbReference>
<dbReference type="PDB" id="5TGM">
    <property type="method" value="X-ray"/>
    <property type="resolution" value="3.50 A"/>
    <property type="chains" value="L9/l9=1-191"/>
</dbReference>
<dbReference type="PDB" id="5Z3G">
    <property type="method" value="EM"/>
    <property type="resolution" value="3.65 A"/>
    <property type="chains" value="L=1-191"/>
</dbReference>
<dbReference type="PDB" id="6ELZ">
    <property type="method" value="EM"/>
    <property type="resolution" value="3.30 A"/>
    <property type="chains" value="H=1-191"/>
</dbReference>
<dbReference type="PDB" id="6EM1">
    <property type="method" value="EM"/>
    <property type="resolution" value="3.60 A"/>
    <property type="chains" value="H=1-191"/>
</dbReference>
<dbReference type="PDB" id="6EM5">
    <property type="method" value="EM"/>
    <property type="resolution" value="4.30 A"/>
    <property type="chains" value="H=1-191"/>
</dbReference>
<dbReference type="PDB" id="6FT6">
    <property type="method" value="EM"/>
    <property type="resolution" value="3.90 A"/>
    <property type="chains" value="H=1-191"/>
</dbReference>
<dbReference type="PDB" id="6GQ1">
    <property type="method" value="EM"/>
    <property type="resolution" value="4.40 A"/>
    <property type="chains" value="H=1-191"/>
</dbReference>
<dbReference type="PDB" id="6GQB">
    <property type="method" value="EM"/>
    <property type="resolution" value="3.90 A"/>
    <property type="chains" value="H=1-191"/>
</dbReference>
<dbReference type="PDB" id="6GQV">
    <property type="method" value="EM"/>
    <property type="resolution" value="4.00 A"/>
    <property type="chains" value="H=1-191"/>
</dbReference>
<dbReference type="PDB" id="6HD7">
    <property type="method" value="EM"/>
    <property type="resolution" value="3.40 A"/>
    <property type="chains" value="L=1-191"/>
</dbReference>
<dbReference type="PDB" id="6HHQ">
    <property type="method" value="X-ray"/>
    <property type="resolution" value="3.10 A"/>
    <property type="chains" value="CK/q=1-191"/>
</dbReference>
<dbReference type="PDB" id="6I7O">
    <property type="method" value="EM"/>
    <property type="resolution" value="5.30 A"/>
    <property type="chains" value="AD/XD=1-190"/>
</dbReference>
<dbReference type="PDB" id="6M62">
    <property type="method" value="EM"/>
    <property type="resolution" value="3.20 A"/>
    <property type="chains" value="H=1-191"/>
</dbReference>
<dbReference type="PDB" id="6N8J">
    <property type="method" value="EM"/>
    <property type="resolution" value="3.50 A"/>
    <property type="chains" value="H=1-191"/>
</dbReference>
<dbReference type="PDB" id="6N8K">
    <property type="method" value="EM"/>
    <property type="resolution" value="3.60 A"/>
    <property type="chains" value="H=1-191"/>
</dbReference>
<dbReference type="PDB" id="6N8L">
    <property type="method" value="EM"/>
    <property type="resolution" value="3.60 A"/>
    <property type="chains" value="H=1-191"/>
</dbReference>
<dbReference type="PDB" id="6N8M">
    <property type="method" value="EM"/>
    <property type="resolution" value="3.50 A"/>
    <property type="chains" value="K=1-191"/>
</dbReference>
<dbReference type="PDB" id="6N8N">
    <property type="method" value="EM"/>
    <property type="resolution" value="3.80 A"/>
    <property type="chains" value="K=1-191"/>
</dbReference>
<dbReference type="PDB" id="6N8O">
    <property type="method" value="EM"/>
    <property type="resolution" value="3.50 A"/>
    <property type="chains" value="K=1-191"/>
</dbReference>
<dbReference type="PDB" id="6OIG">
    <property type="method" value="EM"/>
    <property type="resolution" value="3.80 A"/>
    <property type="chains" value="H=1-191"/>
</dbReference>
<dbReference type="PDB" id="6Q8Y">
    <property type="method" value="EM"/>
    <property type="resolution" value="3.10 A"/>
    <property type="chains" value="AD=1-191"/>
</dbReference>
<dbReference type="PDB" id="6QIK">
    <property type="method" value="EM"/>
    <property type="resolution" value="3.10 A"/>
    <property type="chains" value="F=1-191"/>
</dbReference>
<dbReference type="PDB" id="6QT0">
    <property type="method" value="EM"/>
    <property type="resolution" value="3.40 A"/>
    <property type="chains" value="F=1-189"/>
</dbReference>
<dbReference type="PDB" id="6QTZ">
    <property type="method" value="EM"/>
    <property type="resolution" value="3.50 A"/>
    <property type="chains" value="F=1-191"/>
</dbReference>
<dbReference type="PDB" id="6R84">
    <property type="method" value="EM"/>
    <property type="resolution" value="3.60 A"/>
    <property type="chains" value="7=1-191"/>
</dbReference>
<dbReference type="PDB" id="6R86">
    <property type="method" value="EM"/>
    <property type="resolution" value="3.40 A"/>
    <property type="chains" value="7=1-191"/>
</dbReference>
<dbReference type="PDB" id="6R87">
    <property type="method" value="EM"/>
    <property type="resolution" value="3.40 A"/>
    <property type="chains" value="7=1-191"/>
</dbReference>
<dbReference type="PDB" id="6RI5">
    <property type="method" value="EM"/>
    <property type="resolution" value="3.30 A"/>
    <property type="chains" value="F=1-191"/>
</dbReference>
<dbReference type="PDB" id="6RZZ">
    <property type="method" value="EM"/>
    <property type="resolution" value="3.20 A"/>
    <property type="chains" value="F=1-191"/>
</dbReference>
<dbReference type="PDB" id="6S05">
    <property type="method" value="EM"/>
    <property type="resolution" value="3.90 A"/>
    <property type="chains" value="F=1-191"/>
</dbReference>
<dbReference type="PDB" id="6S47">
    <property type="method" value="EM"/>
    <property type="resolution" value="3.28 A"/>
    <property type="chains" value="AK=1-191"/>
</dbReference>
<dbReference type="PDB" id="6SNT">
    <property type="method" value="EM"/>
    <property type="resolution" value="2.80 A"/>
    <property type="chains" value="o=1-191"/>
</dbReference>
<dbReference type="PDB" id="6SV4">
    <property type="method" value="EM"/>
    <property type="resolution" value="3.30 A"/>
    <property type="chains" value="AD/XD/zD=1-190"/>
</dbReference>
<dbReference type="PDB" id="6T4Q">
    <property type="method" value="EM"/>
    <property type="resolution" value="2.60 A"/>
    <property type="chains" value="LH=1-191"/>
</dbReference>
<dbReference type="PDB" id="6T7I">
    <property type="method" value="EM"/>
    <property type="resolution" value="3.20 A"/>
    <property type="chains" value="LH=1-191"/>
</dbReference>
<dbReference type="PDB" id="6T7T">
    <property type="method" value="EM"/>
    <property type="resolution" value="3.10 A"/>
    <property type="chains" value="LH=1-191"/>
</dbReference>
<dbReference type="PDB" id="6T83">
    <property type="method" value="EM"/>
    <property type="resolution" value="4.00 A"/>
    <property type="chains" value="Hy/Ka=1-191"/>
</dbReference>
<dbReference type="PDB" id="6TB3">
    <property type="method" value="EM"/>
    <property type="resolution" value="2.80 A"/>
    <property type="chains" value="AD=1-191"/>
</dbReference>
<dbReference type="PDB" id="6TNU">
    <property type="method" value="EM"/>
    <property type="resolution" value="3.10 A"/>
    <property type="chains" value="AD=1-191"/>
</dbReference>
<dbReference type="PDB" id="6YLG">
    <property type="method" value="EM"/>
    <property type="resolution" value="3.00 A"/>
    <property type="chains" value="H=1-191"/>
</dbReference>
<dbReference type="PDB" id="6YLH">
    <property type="method" value="EM"/>
    <property type="resolution" value="3.10 A"/>
    <property type="chains" value="H=1-191"/>
</dbReference>
<dbReference type="PDB" id="6YLX">
    <property type="method" value="EM"/>
    <property type="resolution" value="3.90 A"/>
    <property type="chains" value="H=1-191"/>
</dbReference>
<dbReference type="PDB" id="6YLY">
    <property type="method" value="EM"/>
    <property type="resolution" value="3.80 A"/>
    <property type="chains" value="H=1-191"/>
</dbReference>
<dbReference type="PDB" id="6Z6J">
    <property type="method" value="EM"/>
    <property type="resolution" value="3.40 A"/>
    <property type="chains" value="LH=1-191"/>
</dbReference>
<dbReference type="PDB" id="6Z6K">
    <property type="method" value="EM"/>
    <property type="resolution" value="3.40 A"/>
    <property type="chains" value="LH=1-191"/>
</dbReference>
<dbReference type="PDB" id="7AZY">
    <property type="method" value="EM"/>
    <property type="resolution" value="2.88 A"/>
    <property type="chains" value="e=1-191"/>
</dbReference>
<dbReference type="PDB" id="7B7D">
    <property type="method" value="EM"/>
    <property type="resolution" value="3.30 A"/>
    <property type="chains" value="LK=1-191"/>
</dbReference>
<dbReference type="PDB" id="7BT6">
    <property type="method" value="EM"/>
    <property type="resolution" value="3.12 A"/>
    <property type="chains" value="H=1-191"/>
</dbReference>
<dbReference type="PDB" id="7BTB">
    <property type="method" value="EM"/>
    <property type="resolution" value="3.22 A"/>
    <property type="chains" value="H=1-191"/>
</dbReference>
<dbReference type="PDB" id="7MPI">
    <property type="method" value="EM"/>
    <property type="resolution" value="3.05 A"/>
    <property type="chains" value="AH=1-190"/>
</dbReference>
<dbReference type="PDB" id="7MPJ">
    <property type="method" value="EM"/>
    <property type="resolution" value="2.70 A"/>
    <property type="chains" value="AH=1-190"/>
</dbReference>
<dbReference type="PDB" id="7N8B">
    <property type="method" value="EM"/>
    <property type="resolution" value="3.05 A"/>
    <property type="chains" value="AH=1-190"/>
</dbReference>
<dbReference type="PDB" id="7NAC">
    <property type="method" value="EM"/>
    <property type="resolution" value="3.04 A"/>
    <property type="chains" value="H=1-191"/>
</dbReference>
<dbReference type="PDB" id="7NRC">
    <property type="method" value="EM"/>
    <property type="resolution" value="3.90 A"/>
    <property type="chains" value="LK=1-191"/>
</dbReference>
<dbReference type="PDB" id="7NRD">
    <property type="method" value="EM"/>
    <property type="resolution" value="4.36 A"/>
    <property type="chains" value="LK=1-191"/>
</dbReference>
<dbReference type="PDB" id="7OF1">
    <property type="method" value="EM"/>
    <property type="resolution" value="3.10 A"/>
    <property type="chains" value="H=1-191"/>
</dbReference>
<dbReference type="PDB" id="7OH3">
    <property type="method" value="EM"/>
    <property type="resolution" value="3.40 A"/>
    <property type="chains" value="H=1-191"/>
</dbReference>
<dbReference type="PDB" id="7OHP">
    <property type="method" value="EM"/>
    <property type="resolution" value="3.90 A"/>
    <property type="chains" value="H=1-191"/>
</dbReference>
<dbReference type="PDB" id="7OHQ">
    <property type="method" value="EM"/>
    <property type="resolution" value="3.10 A"/>
    <property type="chains" value="H=1-191"/>
</dbReference>
<dbReference type="PDB" id="7OHR">
    <property type="method" value="EM"/>
    <property type="resolution" value="4.72 A"/>
    <property type="chains" value="H=1-191"/>
</dbReference>
<dbReference type="PDB" id="7OHS">
    <property type="method" value="EM"/>
    <property type="resolution" value="4.38 A"/>
    <property type="chains" value="H=1-191"/>
</dbReference>
<dbReference type="PDB" id="7OHT">
    <property type="method" value="EM"/>
    <property type="resolution" value="4.70 A"/>
    <property type="chains" value="H=1-191"/>
</dbReference>
<dbReference type="PDB" id="7OHU">
    <property type="method" value="EM"/>
    <property type="resolution" value="3.70 A"/>
    <property type="chains" value="H=1-191"/>
</dbReference>
<dbReference type="PDB" id="7OHV">
    <property type="method" value="EM"/>
    <property type="resolution" value="3.90 A"/>
    <property type="chains" value="H=1-191"/>
</dbReference>
<dbReference type="PDB" id="7OHW">
    <property type="method" value="EM"/>
    <property type="resolution" value="3.50 A"/>
    <property type="chains" value="H=1-191"/>
</dbReference>
<dbReference type="PDB" id="7OHX">
    <property type="method" value="EM"/>
    <property type="resolution" value="3.30 A"/>
    <property type="chains" value="H=1-191"/>
</dbReference>
<dbReference type="PDB" id="7OHY">
    <property type="method" value="EM"/>
    <property type="resolution" value="3.90 A"/>
    <property type="chains" value="H=1-191"/>
</dbReference>
<dbReference type="PDB" id="7OSA">
    <property type="method" value="X-ray"/>
    <property type="resolution" value="3.00 A"/>
    <property type="chains" value="uL6=1-191"/>
</dbReference>
<dbReference type="PDB" id="7OSM">
    <property type="method" value="X-ray"/>
    <property type="resolution" value="3.00 A"/>
    <property type="chains" value="uL6=1-191"/>
</dbReference>
<dbReference type="PDB" id="7R7A">
    <property type="method" value="EM"/>
    <property type="resolution" value="3.04 A"/>
    <property type="chains" value="H=1-191"/>
</dbReference>
<dbReference type="PDB" id="7RR5">
    <property type="method" value="EM"/>
    <property type="resolution" value="3.23 A"/>
    <property type="chains" value="LH=1-191"/>
</dbReference>
<dbReference type="PDB" id="7TOO">
    <property type="method" value="EM"/>
    <property type="resolution" value="2.70 A"/>
    <property type="chains" value="AL09=1-191"/>
</dbReference>
<dbReference type="PDB" id="7TOP">
    <property type="method" value="EM"/>
    <property type="resolution" value="2.40 A"/>
    <property type="chains" value="AL09=1-191"/>
</dbReference>
<dbReference type="PDB" id="7U0H">
    <property type="method" value="EM"/>
    <property type="resolution" value="2.76 A"/>
    <property type="chains" value="H=1-191"/>
</dbReference>
<dbReference type="PDB" id="7UG6">
    <property type="method" value="EM"/>
    <property type="resolution" value="2.90 A"/>
    <property type="chains" value="H=1-191"/>
</dbReference>
<dbReference type="PDB" id="7UOO">
    <property type="method" value="EM"/>
    <property type="resolution" value="2.34 A"/>
    <property type="chains" value="H=1-191"/>
</dbReference>
<dbReference type="PDB" id="7UQB">
    <property type="method" value="EM"/>
    <property type="resolution" value="2.43 A"/>
    <property type="chains" value="H=1-191"/>
</dbReference>
<dbReference type="PDB" id="7UQZ">
    <property type="method" value="EM"/>
    <property type="resolution" value="2.44 A"/>
    <property type="chains" value="H=1-191"/>
</dbReference>
<dbReference type="PDB" id="7V08">
    <property type="method" value="EM"/>
    <property type="resolution" value="2.36 A"/>
    <property type="chains" value="H=1-191"/>
</dbReference>
<dbReference type="PDB" id="7Z34">
    <property type="method" value="EM"/>
    <property type="resolution" value="3.80 A"/>
    <property type="chains" value="H=1-191"/>
</dbReference>
<dbReference type="PDB" id="7ZPQ">
    <property type="method" value="EM"/>
    <property type="resolution" value="3.47 A"/>
    <property type="chains" value="BH=1-191"/>
</dbReference>
<dbReference type="PDB" id="7ZRS">
    <property type="method" value="EM"/>
    <property type="resolution" value="4.80 A"/>
    <property type="chains" value="BH=1-191"/>
</dbReference>
<dbReference type="PDB" id="7ZS5">
    <property type="method" value="EM"/>
    <property type="resolution" value="3.20 A"/>
    <property type="chains" value="BJ=1-191"/>
</dbReference>
<dbReference type="PDB" id="7ZUW">
    <property type="method" value="EM"/>
    <property type="resolution" value="4.30 A"/>
    <property type="chains" value="BH=1-191"/>
</dbReference>
<dbReference type="PDB" id="7ZUX">
    <property type="method" value="EM"/>
    <property type="resolution" value="2.50 A"/>
    <property type="chains" value="EH=1-191"/>
</dbReference>
<dbReference type="PDB" id="7ZW0">
    <property type="method" value="EM"/>
    <property type="resolution" value="2.40 A"/>
    <property type="chains" value="LL=1-191"/>
</dbReference>
<dbReference type="PDB" id="8AAF">
    <property type="method" value="EM"/>
    <property type="resolution" value="2.50 A"/>
    <property type="chains" value="q=1-191"/>
</dbReference>
<dbReference type="PDB" id="8AGT">
    <property type="method" value="EM"/>
    <property type="resolution" value="2.60 A"/>
    <property type="chains" value="q=1-191"/>
</dbReference>
<dbReference type="PDB" id="8AGU">
    <property type="method" value="EM"/>
    <property type="resolution" value="2.70 A"/>
    <property type="chains" value="q=1-191"/>
</dbReference>
<dbReference type="PDB" id="8AGV">
    <property type="method" value="EM"/>
    <property type="resolution" value="2.60 A"/>
    <property type="chains" value="q=1-191"/>
</dbReference>
<dbReference type="PDB" id="8AGW">
    <property type="method" value="EM"/>
    <property type="resolution" value="2.60 A"/>
    <property type="chains" value="q=1-191"/>
</dbReference>
<dbReference type="PDB" id="8AGX">
    <property type="method" value="EM"/>
    <property type="resolution" value="2.40 A"/>
    <property type="chains" value="q=1-191"/>
</dbReference>
<dbReference type="PDB" id="8AGZ">
    <property type="method" value="EM"/>
    <property type="resolution" value="2.60 A"/>
    <property type="chains" value="q=1-191"/>
</dbReference>
<dbReference type="PDB" id="8BIP">
    <property type="method" value="EM"/>
    <property type="resolution" value="3.10 A"/>
    <property type="chains" value="LH=1-191"/>
</dbReference>
<dbReference type="PDB" id="8BJQ">
    <property type="method" value="EM"/>
    <property type="resolution" value="3.80 A"/>
    <property type="chains" value="LH=1-191"/>
</dbReference>
<dbReference type="PDB" id="8BN3">
    <property type="method" value="EM"/>
    <property type="resolution" value="2.40 A"/>
    <property type="chains" value="L9=1-189"/>
</dbReference>
<dbReference type="PDB" id="8BQD">
    <property type="method" value="EM"/>
    <property type="resolution" value="3.90 A"/>
    <property type="chains" value="AD=1-191"/>
</dbReference>
<dbReference type="PDB" id="8BQX">
    <property type="method" value="EM"/>
    <property type="resolution" value="3.80 A"/>
    <property type="chains" value="AD=1-191"/>
</dbReference>
<dbReference type="PDB" id="8CCS">
    <property type="method" value="EM"/>
    <property type="resolution" value="1.97 A"/>
    <property type="chains" value="LL=1-191"/>
</dbReference>
<dbReference type="PDB" id="8CDL">
    <property type="method" value="EM"/>
    <property type="resolution" value="2.72 A"/>
    <property type="chains" value="LL=1-191"/>
</dbReference>
<dbReference type="PDB" id="8CDR">
    <property type="method" value="EM"/>
    <property type="resolution" value="2.04 A"/>
    <property type="chains" value="LL=1-191"/>
</dbReference>
<dbReference type="PDB" id="8CKU">
    <property type="method" value="EM"/>
    <property type="resolution" value="3.11 A"/>
    <property type="chains" value="LL=1-191"/>
</dbReference>
<dbReference type="PDB" id="8EUB">
    <property type="method" value="EM"/>
    <property type="resolution" value="2.52 A"/>
    <property type="chains" value="AH=1-191"/>
</dbReference>
<dbReference type="PDB" id="8EVP">
    <property type="method" value="EM"/>
    <property type="resolution" value="2.38 A"/>
    <property type="chains" value="AH=1-191"/>
</dbReference>
<dbReference type="PDB" id="8EVQ">
    <property type="method" value="EM"/>
    <property type="resolution" value="2.72 A"/>
    <property type="chains" value="AH=1-191"/>
</dbReference>
<dbReference type="PDB" id="8EVR">
    <property type="method" value="EM"/>
    <property type="resolution" value="2.87 A"/>
    <property type="chains" value="AH=1-191"/>
</dbReference>
<dbReference type="PDB" id="8EVS">
    <property type="method" value="EM"/>
    <property type="resolution" value="2.62 A"/>
    <property type="chains" value="AH=1-191"/>
</dbReference>
<dbReference type="PDB" id="8EVT">
    <property type="method" value="EM"/>
    <property type="resolution" value="2.20 A"/>
    <property type="chains" value="AH=1-191"/>
</dbReference>
<dbReference type="PDB" id="8EWB">
    <property type="method" value="EM"/>
    <property type="resolution" value="2.87 A"/>
    <property type="chains" value="AH=1-191"/>
</dbReference>
<dbReference type="PDB" id="8EWC">
    <property type="method" value="EM"/>
    <property type="resolution" value="2.45 A"/>
    <property type="chains" value="AH=1-191"/>
</dbReference>
<dbReference type="PDB" id="8HFR">
    <property type="method" value="EM"/>
    <property type="resolution" value="2.64 A"/>
    <property type="chains" value="Ib=1-191"/>
</dbReference>
<dbReference type="PDB" id="8K2D">
    <property type="method" value="EM"/>
    <property type="resolution" value="3.20 A"/>
    <property type="chains" value="LH=1-191"/>
</dbReference>
<dbReference type="PDB" id="8K82">
    <property type="method" value="EM"/>
    <property type="resolution" value="3.00 A"/>
    <property type="chains" value="LH=1-191"/>
</dbReference>
<dbReference type="PDB" id="8P4V">
    <property type="method" value="X-ray"/>
    <property type="resolution" value="3.16 A"/>
    <property type="chains" value="CK/q=1-191"/>
</dbReference>
<dbReference type="PDB" id="8P8M">
    <property type="method" value="EM"/>
    <property type="resolution" value="2.66 A"/>
    <property type="chains" value="LM=1-191"/>
</dbReference>
<dbReference type="PDB" id="8P8N">
    <property type="method" value="EM"/>
    <property type="resolution" value="2.15 A"/>
    <property type="chains" value="LM=1-191"/>
</dbReference>
<dbReference type="PDB" id="8P8U">
    <property type="method" value="EM"/>
    <property type="resolution" value="2.23 A"/>
    <property type="chains" value="LM=1-191"/>
</dbReference>
<dbReference type="PDB" id="8P9A">
    <property type="method" value="X-ray"/>
    <property type="resolution" value="2.90 A"/>
    <property type="chains" value="CK/q=1-191"/>
</dbReference>
<dbReference type="PDB" id="8PFR">
    <property type="method" value="EM"/>
    <property type="resolution" value="2.15 A"/>
    <property type="chains" value="LM=1-191"/>
</dbReference>
<dbReference type="PDB" id="8T2X">
    <property type="method" value="EM"/>
    <property type="resolution" value="2.46 A"/>
    <property type="chains" value="AH=1-191"/>
</dbReference>
<dbReference type="PDB" id="8T2Y">
    <property type="method" value="EM"/>
    <property type="resolution" value="2.20 A"/>
    <property type="chains" value="AH=1-191"/>
</dbReference>
<dbReference type="PDB" id="8T2Z">
    <property type="method" value="EM"/>
    <property type="resolution" value="2.40 A"/>
    <property type="chains" value="AH=1-191"/>
</dbReference>
<dbReference type="PDB" id="8T30">
    <property type="method" value="EM"/>
    <property type="resolution" value="2.88 A"/>
    <property type="chains" value="AH=1-191"/>
</dbReference>
<dbReference type="PDB" id="8T3A">
    <property type="method" value="EM"/>
    <property type="resolution" value="2.86 A"/>
    <property type="chains" value="AH=1-191"/>
</dbReference>
<dbReference type="PDB" id="8T3B">
    <property type="method" value="EM"/>
    <property type="resolution" value="3.08 A"/>
    <property type="chains" value="AH=1-191"/>
</dbReference>
<dbReference type="PDB" id="8T3C">
    <property type="method" value="EM"/>
    <property type="resolution" value="3.86 A"/>
    <property type="chains" value="AH=1-191"/>
</dbReference>
<dbReference type="PDB" id="8T3D">
    <property type="method" value="EM"/>
    <property type="resolution" value="2.95 A"/>
    <property type="chains" value="AH=1-191"/>
</dbReference>
<dbReference type="PDB" id="8T3E">
    <property type="method" value="EM"/>
    <property type="resolution" value="3.04 A"/>
    <property type="chains" value="AH=1-191"/>
</dbReference>
<dbReference type="PDB" id="8T3F">
    <property type="method" value="EM"/>
    <property type="resolution" value="3.09 A"/>
    <property type="chains" value="AH=1-191"/>
</dbReference>
<dbReference type="PDB" id="8UT0">
    <property type="method" value="EM"/>
    <property type="resolution" value="3.22 A"/>
    <property type="chains" value="LK=1-191"/>
</dbReference>
<dbReference type="PDB" id="8UTI">
    <property type="method" value="EM"/>
    <property type="resolution" value="3.13 A"/>
    <property type="chains" value="LK=1-191"/>
</dbReference>
<dbReference type="PDB" id="8V83">
    <property type="method" value="EM"/>
    <property type="resolution" value="2.53 A"/>
    <property type="chains" value="H=1-191"/>
</dbReference>
<dbReference type="PDB" id="8V84">
    <property type="method" value="EM"/>
    <property type="resolution" value="2.70 A"/>
    <property type="chains" value="H=1-191"/>
</dbReference>
<dbReference type="PDB" id="8V87">
    <property type="method" value="EM"/>
    <property type="resolution" value="2.66 A"/>
    <property type="chains" value="H=1-191"/>
</dbReference>
<dbReference type="PDB" id="8XU8">
    <property type="method" value="EM"/>
    <property type="resolution" value="3.40 A"/>
    <property type="chains" value="K=1-191"/>
</dbReference>
<dbReference type="PDB" id="8Y0U">
    <property type="method" value="EM"/>
    <property type="resolution" value="3.59 A"/>
    <property type="chains" value="LH=1-191"/>
</dbReference>
<dbReference type="PDB" id="8YLD">
    <property type="method" value="EM"/>
    <property type="resolution" value="3.90 A"/>
    <property type="chains" value="K=1-191"/>
</dbReference>
<dbReference type="PDB" id="8YLR">
    <property type="method" value="EM"/>
    <property type="resolution" value="3.90 A"/>
    <property type="chains" value="K=1-191"/>
</dbReference>
<dbReference type="PDB" id="8Z70">
    <property type="method" value="EM"/>
    <property type="resolution" value="3.20 A"/>
    <property type="chains" value="K=1-191"/>
</dbReference>
<dbReference type="PDB" id="8Z71">
    <property type="method" value="EM"/>
    <property type="resolution" value="3.60 A"/>
    <property type="chains" value="K=1-191"/>
</dbReference>
<dbReference type="PDB" id="9F9S">
    <property type="method" value="EM"/>
    <property type="resolution" value="2.90 A"/>
    <property type="chains" value="LD/MD=1-191"/>
</dbReference>
<dbReference type="PDBsum" id="3J16"/>
<dbReference type="PDBsum" id="3J6X"/>
<dbReference type="PDBsum" id="3J6Y"/>
<dbReference type="PDBsum" id="3J77"/>
<dbReference type="PDBsum" id="3J78"/>
<dbReference type="PDBsum" id="3JCT"/>
<dbReference type="PDBsum" id="4U3M"/>
<dbReference type="PDBsum" id="4U3N"/>
<dbReference type="PDBsum" id="4U3U"/>
<dbReference type="PDBsum" id="4U4N"/>
<dbReference type="PDBsum" id="4U4O"/>
<dbReference type="PDBsum" id="4U4Q"/>
<dbReference type="PDBsum" id="4U4R"/>
<dbReference type="PDBsum" id="4U4U"/>
<dbReference type="PDBsum" id="4U4Y"/>
<dbReference type="PDBsum" id="4U4Z"/>
<dbReference type="PDBsum" id="4U50"/>
<dbReference type="PDBsum" id="4U51"/>
<dbReference type="PDBsum" id="4U52"/>
<dbReference type="PDBsum" id="4U53"/>
<dbReference type="PDBsum" id="4U55"/>
<dbReference type="PDBsum" id="4U56"/>
<dbReference type="PDBsum" id="4U6F"/>
<dbReference type="PDBsum" id="4V4B"/>
<dbReference type="PDBsum" id="4V5Z"/>
<dbReference type="PDBsum" id="4V6I"/>
<dbReference type="PDBsum" id="4V7F"/>
<dbReference type="PDBsum" id="4V7R"/>
<dbReference type="PDBsum" id="4V88"/>
<dbReference type="PDBsum" id="4V8T"/>
<dbReference type="PDBsum" id="4V8Y"/>
<dbReference type="PDBsum" id="4V8Z"/>
<dbReference type="PDBsum" id="4V91"/>
<dbReference type="PDBsum" id="5APN"/>
<dbReference type="PDBsum" id="5APO"/>
<dbReference type="PDBsum" id="5DAT"/>
<dbReference type="PDBsum" id="5DC3"/>
<dbReference type="PDBsum" id="5DGE"/>
<dbReference type="PDBsum" id="5DGF"/>
<dbReference type="PDBsum" id="5DGV"/>
<dbReference type="PDBsum" id="5FCI"/>
<dbReference type="PDBsum" id="5FCJ"/>
<dbReference type="PDBsum" id="5GAK"/>
<dbReference type="PDBsum" id="5H4P"/>
<dbReference type="PDBsum" id="5I4L"/>
<dbReference type="PDBsum" id="5JCS"/>
<dbReference type="PDBsum" id="5JUO"/>
<dbReference type="PDBsum" id="5JUP"/>
<dbReference type="PDBsum" id="5JUS"/>
<dbReference type="PDBsum" id="5JUT"/>
<dbReference type="PDBsum" id="5JUU"/>
<dbReference type="PDBsum" id="5LYB"/>
<dbReference type="PDBsum" id="5M1J"/>
<dbReference type="PDBsum" id="5MC6"/>
<dbReference type="PDBsum" id="5MEI"/>
<dbReference type="PDBsum" id="5NDG"/>
<dbReference type="PDBsum" id="5NDV"/>
<dbReference type="PDBsum" id="5NDW"/>
<dbReference type="PDBsum" id="5OBM"/>
<dbReference type="PDBsum" id="5ON6"/>
<dbReference type="PDBsum" id="5T62"/>
<dbReference type="PDBsum" id="5T6R"/>
<dbReference type="PDBsum" id="5TBW"/>
<dbReference type="PDBsum" id="5TGA"/>
<dbReference type="PDBsum" id="5TGM"/>
<dbReference type="PDBsum" id="5Z3G"/>
<dbReference type="PDBsum" id="6ELZ"/>
<dbReference type="PDBsum" id="6EM1"/>
<dbReference type="PDBsum" id="6EM5"/>
<dbReference type="PDBsum" id="6FT6"/>
<dbReference type="PDBsum" id="6GQ1"/>
<dbReference type="PDBsum" id="6GQB"/>
<dbReference type="PDBsum" id="6GQV"/>
<dbReference type="PDBsum" id="6HD7"/>
<dbReference type="PDBsum" id="6HHQ"/>
<dbReference type="PDBsum" id="6I7O"/>
<dbReference type="PDBsum" id="6M62"/>
<dbReference type="PDBsum" id="6N8J"/>
<dbReference type="PDBsum" id="6N8K"/>
<dbReference type="PDBsum" id="6N8L"/>
<dbReference type="PDBsum" id="6N8M"/>
<dbReference type="PDBsum" id="6N8N"/>
<dbReference type="PDBsum" id="6N8O"/>
<dbReference type="PDBsum" id="6OIG"/>
<dbReference type="PDBsum" id="6Q8Y"/>
<dbReference type="PDBsum" id="6QIK"/>
<dbReference type="PDBsum" id="6QT0"/>
<dbReference type="PDBsum" id="6QTZ"/>
<dbReference type="PDBsum" id="6R84"/>
<dbReference type="PDBsum" id="6R86"/>
<dbReference type="PDBsum" id="6R87"/>
<dbReference type="PDBsum" id="6RI5"/>
<dbReference type="PDBsum" id="6RZZ"/>
<dbReference type="PDBsum" id="6S05"/>
<dbReference type="PDBsum" id="6S47"/>
<dbReference type="PDBsum" id="6SNT"/>
<dbReference type="PDBsum" id="6SV4"/>
<dbReference type="PDBsum" id="6T4Q"/>
<dbReference type="PDBsum" id="6T7I"/>
<dbReference type="PDBsum" id="6T7T"/>
<dbReference type="PDBsum" id="6T83"/>
<dbReference type="PDBsum" id="6TB3"/>
<dbReference type="PDBsum" id="6TNU"/>
<dbReference type="PDBsum" id="6YLG"/>
<dbReference type="PDBsum" id="6YLH"/>
<dbReference type="PDBsum" id="6YLX"/>
<dbReference type="PDBsum" id="6YLY"/>
<dbReference type="PDBsum" id="6Z6J"/>
<dbReference type="PDBsum" id="6Z6K"/>
<dbReference type="PDBsum" id="7AZY"/>
<dbReference type="PDBsum" id="7B7D"/>
<dbReference type="PDBsum" id="7BT6"/>
<dbReference type="PDBsum" id="7BTB"/>
<dbReference type="PDBsum" id="7MPI"/>
<dbReference type="PDBsum" id="7MPJ"/>
<dbReference type="PDBsum" id="7N8B"/>
<dbReference type="PDBsum" id="7NAC"/>
<dbReference type="PDBsum" id="7NRC"/>
<dbReference type="PDBsum" id="7NRD"/>
<dbReference type="PDBsum" id="7OF1"/>
<dbReference type="PDBsum" id="7OH3"/>
<dbReference type="PDBsum" id="7OHP"/>
<dbReference type="PDBsum" id="7OHQ"/>
<dbReference type="PDBsum" id="7OHR"/>
<dbReference type="PDBsum" id="7OHS"/>
<dbReference type="PDBsum" id="7OHT"/>
<dbReference type="PDBsum" id="7OHU"/>
<dbReference type="PDBsum" id="7OHV"/>
<dbReference type="PDBsum" id="7OHW"/>
<dbReference type="PDBsum" id="7OHX"/>
<dbReference type="PDBsum" id="7OHY"/>
<dbReference type="PDBsum" id="7OSA"/>
<dbReference type="PDBsum" id="7OSM"/>
<dbReference type="PDBsum" id="7R7A"/>
<dbReference type="PDBsum" id="7RR5"/>
<dbReference type="PDBsum" id="7TOO"/>
<dbReference type="PDBsum" id="7TOP"/>
<dbReference type="PDBsum" id="7U0H"/>
<dbReference type="PDBsum" id="7UG6"/>
<dbReference type="PDBsum" id="7UOO"/>
<dbReference type="PDBsum" id="7UQB"/>
<dbReference type="PDBsum" id="7UQZ"/>
<dbReference type="PDBsum" id="7V08"/>
<dbReference type="PDBsum" id="7Z34"/>
<dbReference type="PDBsum" id="7ZPQ"/>
<dbReference type="PDBsum" id="7ZRS"/>
<dbReference type="PDBsum" id="7ZS5"/>
<dbReference type="PDBsum" id="7ZUW"/>
<dbReference type="PDBsum" id="7ZUX"/>
<dbReference type="PDBsum" id="7ZW0"/>
<dbReference type="PDBsum" id="8AAF"/>
<dbReference type="PDBsum" id="8AGT"/>
<dbReference type="PDBsum" id="8AGU"/>
<dbReference type="PDBsum" id="8AGV"/>
<dbReference type="PDBsum" id="8AGW"/>
<dbReference type="PDBsum" id="8AGX"/>
<dbReference type="PDBsum" id="8AGZ"/>
<dbReference type="PDBsum" id="8BIP"/>
<dbReference type="PDBsum" id="8BJQ"/>
<dbReference type="PDBsum" id="8BN3"/>
<dbReference type="PDBsum" id="8BQD"/>
<dbReference type="PDBsum" id="8BQX"/>
<dbReference type="PDBsum" id="8CCS"/>
<dbReference type="PDBsum" id="8CDL"/>
<dbReference type="PDBsum" id="8CDR"/>
<dbReference type="PDBsum" id="8CKU"/>
<dbReference type="PDBsum" id="8EUB"/>
<dbReference type="PDBsum" id="8EVP"/>
<dbReference type="PDBsum" id="8EVQ"/>
<dbReference type="PDBsum" id="8EVR"/>
<dbReference type="PDBsum" id="8EVS"/>
<dbReference type="PDBsum" id="8EVT"/>
<dbReference type="PDBsum" id="8EWB"/>
<dbReference type="PDBsum" id="8EWC"/>
<dbReference type="PDBsum" id="8HFR"/>
<dbReference type="PDBsum" id="8K2D"/>
<dbReference type="PDBsum" id="8K82"/>
<dbReference type="PDBsum" id="8P4V"/>
<dbReference type="PDBsum" id="8P8M"/>
<dbReference type="PDBsum" id="8P8N"/>
<dbReference type="PDBsum" id="8P8U"/>
<dbReference type="PDBsum" id="8P9A"/>
<dbReference type="PDBsum" id="8PFR"/>
<dbReference type="PDBsum" id="8T2X"/>
<dbReference type="PDBsum" id="8T2Y"/>
<dbReference type="PDBsum" id="8T2Z"/>
<dbReference type="PDBsum" id="8T30"/>
<dbReference type="PDBsum" id="8T3A"/>
<dbReference type="PDBsum" id="8T3B"/>
<dbReference type="PDBsum" id="8T3C"/>
<dbReference type="PDBsum" id="8T3D"/>
<dbReference type="PDBsum" id="8T3E"/>
<dbReference type="PDBsum" id="8T3F"/>
<dbReference type="PDBsum" id="8UT0"/>
<dbReference type="PDBsum" id="8UTI"/>
<dbReference type="PDBsum" id="8V83"/>
<dbReference type="PDBsum" id="8V84"/>
<dbReference type="PDBsum" id="8V87"/>
<dbReference type="PDBsum" id="8XU8"/>
<dbReference type="PDBsum" id="8Y0U"/>
<dbReference type="PDBsum" id="8YLD"/>
<dbReference type="PDBsum" id="8YLR"/>
<dbReference type="PDBsum" id="8Z70"/>
<dbReference type="PDBsum" id="8Z71"/>
<dbReference type="PDBsum" id="9F9S"/>
<dbReference type="EMDB" id="EMD-0047"/>
<dbReference type="EMDB" id="EMD-0048"/>
<dbReference type="EMDB" id="EMD-0049"/>
<dbReference type="EMDB" id="EMD-0202"/>
<dbReference type="EMDB" id="EMD-0369"/>
<dbReference type="EMDB" id="EMD-0370"/>
<dbReference type="EMDB" id="EMD-0371"/>
<dbReference type="EMDB" id="EMD-0372"/>
<dbReference type="EMDB" id="EMD-0373"/>
<dbReference type="EMDB" id="EMD-0374"/>
<dbReference type="EMDB" id="EMD-10068"/>
<dbReference type="EMDB" id="EMD-10071"/>
<dbReference type="EMDB" id="EMD-10098"/>
<dbReference type="EMDB" id="EMD-10262"/>
<dbReference type="EMDB" id="EMD-10315"/>
<dbReference type="EMDB" id="EMD-10377"/>
<dbReference type="EMDB" id="EMD-10396"/>
<dbReference type="EMDB" id="EMD-10397"/>
<dbReference type="EMDB" id="EMD-10398"/>
<dbReference type="EMDB" id="EMD-10431"/>
<dbReference type="EMDB" id="EMD-10537"/>
<dbReference type="EMDB" id="EMD-10838"/>
<dbReference type="EMDB" id="EMD-10839"/>
<dbReference type="EMDB" id="EMD-10841"/>
<dbReference type="EMDB" id="EMD-10842"/>
<dbReference type="EMDB" id="EMD-11096"/>
<dbReference type="EMDB" id="EMD-11097"/>
<dbReference type="EMDB" id="EMD-11951"/>
<dbReference type="EMDB" id="EMD-12081"/>
<dbReference type="EMDB" id="EMD-12534"/>
<dbReference type="EMDB" id="EMD-12535"/>
<dbReference type="EMDB" id="EMD-12866"/>
<dbReference type="EMDB" id="EMD-12892"/>
<dbReference type="EMDB" id="EMD-12904"/>
<dbReference type="EMDB" id="EMD-12905"/>
<dbReference type="EMDB" id="EMD-12906"/>
<dbReference type="EMDB" id="EMD-12907"/>
<dbReference type="EMDB" id="EMD-12908"/>
<dbReference type="EMDB" id="EMD-12909"/>
<dbReference type="EMDB" id="EMD-12910"/>
<dbReference type="EMDB" id="EMD-12911"/>
<dbReference type="EMDB" id="EMD-12912"/>
<dbReference type="EMDB" id="EMD-12913"/>
<dbReference type="EMDB" id="EMD-14471"/>
<dbReference type="EMDB" id="EMD-14861"/>
<dbReference type="EMDB" id="EMD-14921"/>
<dbReference type="EMDB" id="EMD-14926"/>
<dbReference type="EMDB" id="EMD-14979"/>
<dbReference type="EMDB" id="EMD-14990"/>
<dbReference type="EMDB" id="EMD-15296"/>
<dbReference type="EMDB" id="EMD-15423"/>
<dbReference type="EMDB" id="EMD-15424"/>
<dbReference type="EMDB" id="EMD-15425"/>
<dbReference type="EMDB" id="EMD-15426"/>
<dbReference type="EMDB" id="EMD-15427"/>
<dbReference type="EMDB" id="EMD-15428"/>
<dbReference type="EMDB" id="EMD-16086"/>
<dbReference type="EMDB" id="EMD-16090"/>
<dbReference type="EMDB" id="EMD-16191"/>
<dbReference type="EMDB" id="EMD-16563"/>
<dbReference type="EMDB" id="EMD-16591"/>
<dbReference type="EMDB" id="EMD-16594"/>
<dbReference type="EMDB" id="EMD-16702"/>
<dbReference type="EMDB" id="EMD-17549"/>
<dbReference type="EMDB" id="EMD-17550"/>
<dbReference type="EMDB" id="EMD-17552"/>
<dbReference type="EMDB" id="EMD-17653"/>
<dbReference type="EMDB" id="EMD-20077"/>
<dbReference type="EMDB" id="EMD-23934"/>
<dbReference type="EMDB" id="EMD-23935"/>
<dbReference type="EMDB" id="EMD-24235"/>
<dbReference type="EMDB" id="EMD-24269"/>
<dbReference type="EMDB" id="EMD-24296"/>
<dbReference type="EMDB" id="EMD-24652"/>
<dbReference type="EMDB" id="EMD-26033"/>
<dbReference type="EMDB" id="EMD-26034"/>
<dbReference type="EMDB" id="EMD-26259"/>
<dbReference type="EMDB" id="EMD-26485"/>
<dbReference type="EMDB" id="EMD-26651"/>
<dbReference type="EMDB" id="EMD-26686"/>
<dbReference type="EMDB" id="EMD-26703"/>
<dbReference type="EMDB" id="EMD-26941"/>
<dbReference type="EMDB" id="EMD-28610"/>
<dbReference type="EMDB" id="EMD-28632"/>
<dbReference type="EMDB" id="EMD-28633"/>
<dbReference type="EMDB" id="EMD-28634"/>
<dbReference type="EMDB" id="EMD-28635"/>
<dbReference type="EMDB" id="EMD-28636"/>
<dbReference type="EMDB" id="EMD-28642"/>
<dbReference type="EMDB" id="EMD-28643"/>
<dbReference type="EMDB" id="EMD-30108"/>
<dbReference type="EMDB" id="EMD-30170"/>
<dbReference type="EMDB" id="EMD-30174"/>
<dbReference type="EMDB" id="EMD-3461"/>
<dbReference type="EMDB" id="EMD-34725"/>
<dbReference type="EMDB" id="EMD-36839"/>
<dbReference type="EMDB" id="EMD-36945"/>
<dbReference type="EMDB" id="EMD-38660"/>
<dbReference type="EMDB" id="EMD-40990"/>
<dbReference type="EMDB" id="EMD-40991"/>
<dbReference type="EMDB" id="EMD-40992"/>
<dbReference type="EMDB" id="EMD-40993"/>
<dbReference type="EMDB" id="EMD-40997"/>
<dbReference type="EMDB" id="EMD-40998"/>
<dbReference type="EMDB" id="EMD-40999"/>
<dbReference type="EMDB" id="EMD-41000"/>
<dbReference type="EMDB" id="EMD-41001"/>
<dbReference type="EMDB" id="EMD-41002"/>
<dbReference type="EMDB" id="EMD-4140"/>
<dbReference type="EMDB" id="EMD-42525"/>
<dbReference type="EMDB" id="EMD-42540"/>
<dbReference type="EMDB" id="EMD-43017"/>
<dbReference type="EMDB" id="EMD-4302"/>
<dbReference type="EMDB" id="EMD-43021"/>
<dbReference type="EMDB" id="EMD-43027"/>
<dbReference type="EMDB" id="EMD-4427"/>
<dbReference type="EMDB" id="EMD-4474"/>
<dbReference type="EMDB" id="EMD-4560"/>
<dbReference type="EMDB" id="EMD-4630"/>
<dbReference type="EMDB" id="EMD-4636"/>
<dbReference type="EMDB" id="EMD-4751"/>
<dbReference type="EMDB" id="EMD-4752"/>
<dbReference type="EMDB" id="EMD-4753"/>
<dbReference type="EMDB" id="EMD-4884"/>
<dbReference type="EMDB" id="EMD-50259"/>
<dbReference type="EMDB" id="EMD-6878"/>
<dbReference type="EMDB" id="EMD-8362"/>
<dbReference type="EMDB" id="EMD-8368"/>
<dbReference type="SMR" id="P05738"/>
<dbReference type="BioGRID" id="33105">
    <property type="interactions" value="368"/>
</dbReference>
<dbReference type="ComplexPortal" id="CPX-1601">
    <property type="entry name" value="60S cytosolic large ribosomal subunit"/>
</dbReference>
<dbReference type="DIP" id="DIP-4826N"/>
<dbReference type="FunCoup" id="P05738">
    <property type="interactions" value="1137"/>
</dbReference>
<dbReference type="IntAct" id="P05738">
    <property type="interactions" value="117"/>
</dbReference>
<dbReference type="MINT" id="P05738"/>
<dbReference type="STRING" id="4932.YGL147C"/>
<dbReference type="iPTMnet" id="P05738"/>
<dbReference type="PaxDb" id="4932-YGL147C"/>
<dbReference type="PeptideAtlas" id="P05738"/>
<dbReference type="EnsemblFungi" id="YGL147C_mRNA">
    <property type="protein sequence ID" value="YGL147C"/>
    <property type="gene ID" value="YGL147C"/>
</dbReference>
<dbReference type="GeneID" id="852730"/>
<dbReference type="KEGG" id="sce:YGL147C"/>
<dbReference type="AGR" id="SGD:S000003115"/>
<dbReference type="SGD" id="S000003115">
    <property type="gene designation" value="RPL9A"/>
</dbReference>
<dbReference type="VEuPathDB" id="FungiDB:YGL147C"/>
<dbReference type="eggNOG" id="KOG3255">
    <property type="taxonomic scope" value="Eukaryota"/>
</dbReference>
<dbReference type="GeneTree" id="ENSGT00390000015224"/>
<dbReference type="HOGENOM" id="CLU_065464_0_0_1"/>
<dbReference type="InParanoid" id="P05738"/>
<dbReference type="OMA" id="CASHITN"/>
<dbReference type="OrthoDB" id="10252633at2759"/>
<dbReference type="BioCyc" id="YEAST:G3O-30641-MONOMER"/>
<dbReference type="BioGRID-ORCS" id="852730">
    <property type="hits" value="2 hits in 10 CRISPR screens"/>
</dbReference>
<dbReference type="EvolutionaryTrace" id="P05738"/>
<dbReference type="PRO" id="PR:P05738"/>
<dbReference type="Proteomes" id="UP000002311">
    <property type="component" value="Chromosome VII"/>
</dbReference>
<dbReference type="RNAct" id="P05738">
    <property type="molecule type" value="protein"/>
</dbReference>
<dbReference type="GO" id="GO:0005829">
    <property type="term" value="C:cytosol"/>
    <property type="evidence" value="ECO:0000304"/>
    <property type="project" value="Reactome"/>
</dbReference>
<dbReference type="GO" id="GO:0022625">
    <property type="term" value="C:cytosolic large ribosomal subunit"/>
    <property type="evidence" value="ECO:0000314"/>
    <property type="project" value="SGD"/>
</dbReference>
<dbReference type="GO" id="GO:0019843">
    <property type="term" value="F:rRNA binding"/>
    <property type="evidence" value="ECO:0007669"/>
    <property type="project" value="InterPro"/>
</dbReference>
<dbReference type="GO" id="GO:0003735">
    <property type="term" value="F:structural constituent of ribosome"/>
    <property type="evidence" value="ECO:0000314"/>
    <property type="project" value="SGD"/>
</dbReference>
<dbReference type="GO" id="GO:0002181">
    <property type="term" value="P:cytoplasmic translation"/>
    <property type="evidence" value="ECO:0000314"/>
    <property type="project" value="SGD"/>
</dbReference>
<dbReference type="FunFam" id="3.90.930.12:FF:000003">
    <property type="entry name" value="60S ribosomal protein L9"/>
    <property type="match status" value="1"/>
</dbReference>
<dbReference type="FunFam" id="3.90.930.12:FF:000004">
    <property type="entry name" value="60S ribosomal protein L9"/>
    <property type="match status" value="1"/>
</dbReference>
<dbReference type="Gene3D" id="3.90.930.12">
    <property type="entry name" value="Ribosomal protein L6, alpha-beta domain"/>
    <property type="match status" value="2"/>
</dbReference>
<dbReference type="InterPro" id="IPR000702">
    <property type="entry name" value="Ribosomal_uL6-like"/>
</dbReference>
<dbReference type="InterPro" id="IPR036789">
    <property type="entry name" value="Ribosomal_uL6-like_a/b-dom_sf"/>
</dbReference>
<dbReference type="InterPro" id="IPR020040">
    <property type="entry name" value="Ribosomal_uL6_a/b-dom"/>
</dbReference>
<dbReference type="InterPro" id="IPR002359">
    <property type="entry name" value="Ribosomal_uL6_CS2"/>
</dbReference>
<dbReference type="PANTHER" id="PTHR11655:SF16">
    <property type="entry name" value="60S RIBOSOMAL PROTEIN L9"/>
    <property type="match status" value="1"/>
</dbReference>
<dbReference type="PANTHER" id="PTHR11655">
    <property type="entry name" value="60S/50S RIBOSOMAL PROTEIN L6/L9"/>
    <property type="match status" value="1"/>
</dbReference>
<dbReference type="Pfam" id="PF00347">
    <property type="entry name" value="Ribosomal_L6"/>
    <property type="match status" value="2"/>
</dbReference>
<dbReference type="PIRSF" id="PIRSF002162">
    <property type="entry name" value="Ribosomal_L6"/>
    <property type="match status" value="1"/>
</dbReference>
<dbReference type="SUPFAM" id="SSF56053">
    <property type="entry name" value="Ribosomal protein L6"/>
    <property type="match status" value="2"/>
</dbReference>
<dbReference type="PROSITE" id="PS00700">
    <property type="entry name" value="RIBOSOMAL_L6_2"/>
    <property type="match status" value="1"/>
</dbReference>
<reference key="1">
    <citation type="journal article" date="1991" name="Nucleic Acids Res.">
        <title>Cloning and characterisation of a yeast homolog of the mammalian ribosomal protein L9.</title>
        <authorList>
            <person name="Jones D.G.L."/>
            <person name="Reusser U."/>
            <person name="Braus G.H."/>
        </authorList>
    </citation>
    <scope>NUCLEOTIDE SEQUENCE [GENOMIC DNA]</scope>
</reference>
<reference key="2">
    <citation type="journal article" date="1997" name="Yeast">
        <title>The sequence of a nearly unclonable 22.8 kb segment on the left arm chromosome VII from Saccharomyces cerevisiae reveals ARO2, RPL9A, TIP1, MRF1 genes and six new open reading frames.</title>
        <authorList>
            <person name="Voet M."/>
            <person name="Defoor E."/>
            <person name="Verhasselt P."/>
            <person name="Riles L."/>
            <person name="Robben J."/>
            <person name="Volckaert G."/>
        </authorList>
    </citation>
    <scope>NUCLEOTIDE SEQUENCE [GENOMIC DNA]</scope>
    <source>
        <strain>ATCC 96604 / S288c / FY1679</strain>
    </source>
</reference>
<reference key="3">
    <citation type="journal article" date="1997" name="Nature">
        <title>The nucleotide sequence of Saccharomyces cerevisiae chromosome VII.</title>
        <authorList>
            <person name="Tettelin H."/>
            <person name="Agostoni-Carbone M.L."/>
            <person name="Albermann K."/>
            <person name="Albers M."/>
            <person name="Arroyo J."/>
            <person name="Backes U."/>
            <person name="Barreiros T."/>
            <person name="Bertani I."/>
            <person name="Bjourson A.J."/>
            <person name="Brueckner M."/>
            <person name="Bruschi C.V."/>
            <person name="Carignani G."/>
            <person name="Castagnoli L."/>
            <person name="Cerdan E."/>
            <person name="Clemente M.L."/>
            <person name="Coblenz A."/>
            <person name="Coglievina M."/>
            <person name="Coissac E."/>
            <person name="Defoor E."/>
            <person name="Del Bino S."/>
            <person name="Delius H."/>
            <person name="Delneri D."/>
            <person name="de Wergifosse P."/>
            <person name="Dujon B."/>
            <person name="Durand P."/>
            <person name="Entian K.-D."/>
            <person name="Eraso P."/>
            <person name="Escribano V."/>
            <person name="Fabiani L."/>
            <person name="Fartmann B."/>
            <person name="Feroli F."/>
            <person name="Feuermann M."/>
            <person name="Frontali L."/>
            <person name="Garcia-Gonzalez M."/>
            <person name="Garcia-Saez M.I."/>
            <person name="Goffeau A."/>
            <person name="Guerreiro P."/>
            <person name="Hani J."/>
            <person name="Hansen M."/>
            <person name="Hebling U."/>
            <person name="Hernandez K."/>
            <person name="Heumann K."/>
            <person name="Hilger F."/>
            <person name="Hofmann B."/>
            <person name="Indge K.J."/>
            <person name="James C.M."/>
            <person name="Klima R."/>
            <person name="Koetter P."/>
            <person name="Kramer B."/>
            <person name="Kramer W."/>
            <person name="Lauquin G."/>
            <person name="Leuther H."/>
            <person name="Louis E.J."/>
            <person name="Maillier E."/>
            <person name="Marconi A."/>
            <person name="Martegani E."/>
            <person name="Mazon M.J."/>
            <person name="Mazzoni C."/>
            <person name="McReynolds A.D.K."/>
            <person name="Melchioretto P."/>
            <person name="Mewes H.-W."/>
            <person name="Minenkova O."/>
            <person name="Mueller-Auer S."/>
            <person name="Nawrocki A."/>
            <person name="Netter P."/>
            <person name="Neu R."/>
            <person name="Nombela C."/>
            <person name="Oliver S.G."/>
            <person name="Panzeri L."/>
            <person name="Paoluzi S."/>
            <person name="Plevani P."/>
            <person name="Portetelle D."/>
            <person name="Portillo F."/>
            <person name="Potier S."/>
            <person name="Purnelle B."/>
            <person name="Rieger M."/>
            <person name="Riles L."/>
            <person name="Rinaldi T."/>
            <person name="Robben J."/>
            <person name="Rodrigues-Pousada C."/>
            <person name="Rodriguez-Belmonte E."/>
            <person name="Rodriguez-Torres A.M."/>
            <person name="Rose M."/>
            <person name="Ruzzi M."/>
            <person name="Saliola M."/>
            <person name="Sanchez-Perez M."/>
            <person name="Schaefer B."/>
            <person name="Schaefer M."/>
            <person name="Scharfe M."/>
            <person name="Schmidheini T."/>
            <person name="Schreer A."/>
            <person name="Skala J."/>
            <person name="Souciet J.-L."/>
            <person name="Steensma H.Y."/>
            <person name="Talla E."/>
            <person name="Thierry A."/>
            <person name="Vandenbol M."/>
            <person name="van der Aart Q.J.M."/>
            <person name="Van Dyck L."/>
            <person name="Vanoni M."/>
            <person name="Verhasselt P."/>
            <person name="Voet M."/>
            <person name="Volckaert G."/>
            <person name="Wambutt R."/>
            <person name="Watson M.D."/>
            <person name="Weber N."/>
            <person name="Wedler E."/>
            <person name="Wedler H."/>
            <person name="Wipfli P."/>
            <person name="Wolf K."/>
            <person name="Wright L.F."/>
            <person name="Zaccaria P."/>
            <person name="Zimmermann M."/>
            <person name="Zollner A."/>
            <person name="Kleine K."/>
        </authorList>
    </citation>
    <scope>NUCLEOTIDE SEQUENCE [LARGE SCALE GENOMIC DNA]</scope>
    <source>
        <strain>ATCC 204508 / S288c</strain>
    </source>
</reference>
<reference key="4">
    <citation type="journal article" date="2014" name="G3 (Bethesda)">
        <title>The reference genome sequence of Saccharomyces cerevisiae: Then and now.</title>
        <authorList>
            <person name="Engel S.R."/>
            <person name="Dietrich F.S."/>
            <person name="Fisk D.G."/>
            <person name="Binkley G."/>
            <person name="Balakrishnan R."/>
            <person name="Costanzo M.C."/>
            <person name="Dwight S.S."/>
            <person name="Hitz B.C."/>
            <person name="Karra K."/>
            <person name="Nash R.S."/>
            <person name="Weng S."/>
            <person name="Wong E.D."/>
            <person name="Lloyd P."/>
            <person name="Skrzypek M.S."/>
            <person name="Miyasato S.R."/>
            <person name="Simison M."/>
            <person name="Cherry J.M."/>
        </authorList>
    </citation>
    <scope>GENOME REANNOTATION</scope>
    <source>
        <strain>ATCC 204508 / S288c</strain>
    </source>
</reference>
<reference key="5">
    <citation type="journal article" date="1984" name="Mol. Gen. Genet.">
        <title>Yeast ribosomal proteins. VIII. Isolation of two proteins and sequence characterization of twenty-four proteins from cytoplasmic ribosomes.</title>
        <authorList>
            <person name="Otaka E."/>
            <person name="Higo K."/>
            <person name="Itoh T."/>
        </authorList>
    </citation>
    <scope>PARTIAL PROTEIN SEQUENCE OF 1-40</scope>
</reference>
<reference key="6">
    <citation type="journal article" date="1998" name="Yeast">
        <title>The list of cytoplasmic ribosomal proteins of Saccharomyces cerevisiae.</title>
        <authorList>
            <person name="Planta R.J."/>
            <person name="Mager W.H."/>
        </authorList>
    </citation>
    <scope>NOMENCLATURE</scope>
    <scope>SUBUNIT</scope>
</reference>
<reference key="7">
    <citation type="journal article" date="2003" name="Nature">
        <title>Global analysis of protein localization in budding yeast.</title>
        <authorList>
            <person name="Huh W.-K."/>
            <person name="Falvo J.V."/>
            <person name="Gerke L.C."/>
            <person name="Carroll A.S."/>
            <person name="Howson R.W."/>
            <person name="Weissman J.S."/>
            <person name="O'Shea E.K."/>
        </authorList>
    </citation>
    <scope>SUBCELLULAR LOCATION [LARGE SCALE ANALYSIS]</scope>
</reference>
<reference key="8">
    <citation type="journal article" date="2003" name="Nature">
        <title>Global analysis of protein expression in yeast.</title>
        <authorList>
            <person name="Ghaemmaghami S."/>
            <person name="Huh W.-K."/>
            <person name="Bower K."/>
            <person name="Howson R.W."/>
            <person name="Belle A."/>
            <person name="Dephoure N."/>
            <person name="O'Shea E.K."/>
            <person name="Weissman J.S."/>
        </authorList>
    </citation>
    <scope>LEVEL OF PROTEIN EXPRESSION [LARGE SCALE ANALYSIS]</scope>
</reference>
<reference key="9">
    <citation type="journal article" date="2014" name="Curr. Opin. Struct. Biol.">
        <title>A new system for naming ribosomal proteins.</title>
        <authorList>
            <person name="Ban N."/>
            <person name="Beckmann R."/>
            <person name="Cate J.H.D."/>
            <person name="Dinman J.D."/>
            <person name="Dragon F."/>
            <person name="Ellis S.R."/>
            <person name="Lafontaine D.L.J."/>
            <person name="Lindahl L."/>
            <person name="Liljas A."/>
            <person name="Lipton J.M."/>
            <person name="McAlear M.A."/>
            <person name="Moore P.B."/>
            <person name="Noller H.F."/>
            <person name="Ortega J."/>
            <person name="Panse V.G."/>
            <person name="Ramakrishnan V."/>
            <person name="Spahn C.M.T."/>
            <person name="Steitz T.A."/>
            <person name="Tchorzewski M."/>
            <person name="Tollervey D."/>
            <person name="Warren A.J."/>
            <person name="Williamson J.R."/>
            <person name="Wilson D."/>
            <person name="Yonath A."/>
            <person name="Yusupov M."/>
        </authorList>
    </citation>
    <scope>NOMENCLATURE</scope>
</reference>
<reference key="10">
    <citation type="journal article" date="2001" name="Cell">
        <title>Structure of the 80S ribosome from Saccharomyces cerevisiae -- tRNA-ribosome and subunit-subunit interactions.</title>
        <authorList>
            <person name="Spahn C.M.T."/>
            <person name="Beckmann R."/>
            <person name="Eswar N."/>
            <person name="Penczek P.A."/>
            <person name="Sali A."/>
            <person name="Blobel G."/>
            <person name="Frank J."/>
        </authorList>
    </citation>
    <scope>3D-STRUCTURE MODELING OF 7-184</scope>
    <scope>ELECTRON MICROSCOPY</scope>
</reference>
<reference key="11">
    <citation type="journal article" date="2004" name="EMBO J.">
        <title>Domain movements of elongation factor eEF2 and the eukaryotic 80S ribosome facilitate tRNA translocation.</title>
        <authorList>
            <person name="Spahn C.M.T."/>
            <person name="Gomez-Lorenzo M.G."/>
            <person name="Grassucci R.A."/>
            <person name="Joergensen R."/>
            <person name="Andersen G.R."/>
            <person name="Beckmann R."/>
            <person name="Penczek P.A."/>
            <person name="Ballesta J.P.G."/>
            <person name="Frank J."/>
        </authorList>
    </citation>
    <scope>3D-STRUCTURE MODELING</scope>
    <scope>ELECTRON MICROSCOPY</scope>
</reference>
<reference key="12">
    <citation type="journal article" date="2010" name="Science">
        <title>Crystal structure of the eukaryotic ribosome.</title>
        <authorList>
            <person name="Ben-Shem A."/>
            <person name="Jenner L."/>
            <person name="Yusupova G."/>
            <person name="Yusupov M."/>
        </authorList>
    </citation>
    <scope>X-RAY CRYSTALLOGRAPHY (4.0 ANGSTROMS) OF 80S RIBOSOME</scope>
</reference>
<reference key="13">
    <citation type="journal article" date="2011" name="Science">
        <title>The structure of the eukaryotic ribosome at 3.0 A resolution.</title>
        <authorList>
            <person name="Ben-Shem A."/>
            <person name="Garreau de Loubresse N."/>
            <person name="Melnikov S."/>
            <person name="Jenner L."/>
            <person name="Yusupova G."/>
            <person name="Yusupov M."/>
        </authorList>
    </citation>
    <scope>X-RAY CRYSTALLOGRAPHY (3.0 ANGSTROMS) OF 80S RIBOSOME</scope>
    <scope>SUBUNIT</scope>
    <scope>SUBCELLULAR LOCATION</scope>
</reference>
<name>RL9A_YEAST</name>
<keyword id="KW-0002">3D-structure</keyword>
<keyword id="KW-0963">Cytoplasm</keyword>
<keyword id="KW-0903">Direct protein sequencing</keyword>
<keyword id="KW-1185">Reference proteome</keyword>
<keyword id="KW-0687">Ribonucleoprotein</keyword>
<keyword id="KW-0689">Ribosomal protein</keyword>
<comment type="function">
    <text evidence="7">Component of the ribosome, a large ribonucleoprotein complex responsible for the synthesis of proteins in the cell. The small ribosomal subunit (SSU) binds messenger RNAs (mRNAs) and translates the encoded message by selecting cognate aminoacyl-transfer RNA (tRNA) molecules. The large subunit (LSU) contains the ribosomal catalytic site termed the peptidyl transferase center (PTC), which catalyzes the formation of peptide bonds, thereby polymerizing the amino acids delivered by tRNAs into a polypeptide chain. The nascent polypeptides leave the ribosome through a tunnel in the LSU and interact with protein factors that function in enzymatic processing, targeting, and the membrane insertion of nascent chains at the exit of the ribosomal tunnel.</text>
</comment>
<comment type="subunit">
    <text evidence="3 8">Component of the large ribosomal subunit (LSU). Mature yeast ribosomes consist of a small (40S) and a large (60S) subunit. The 40S small subunit contains 1 molecule of ribosomal RNA (18S rRNA) and 33 different proteins (encoded by 57 genes). The large 60S subunit contains 3 rRNA molecules (25S, 5.8S and 5S rRNA) and 46 different proteins (encoded by 81 genes). uL6 lines the binding pocket for eukaryotic elongation factor 2 (eEF2) (PubMed:22096102, PubMed:9559554).</text>
</comment>
<comment type="subcellular location">
    <subcellularLocation>
        <location evidence="1 3">Cytoplasm</location>
    </subcellularLocation>
</comment>
<comment type="miscellaneous">
    <text evidence="2">Present with 52400 molecules/cell in log phase SD medium.</text>
</comment>
<comment type="miscellaneous">
    <text evidence="6">There are 2 genes for uL6 in yeast.</text>
</comment>
<comment type="similarity">
    <text evidence="6">Belongs to the universal ribosomal protein uL6 family.</text>
</comment>
<organism>
    <name type="scientific">Saccharomyces cerevisiae (strain ATCC 204508 / S288c)</name>
    <name type="common">Baker's yeast</name>
    <dbReference type="NCBI Taxonomy" id="559292"/>
    <lineage>
        <taxon>Eukaryota</taxon>
        <taxon>Fungi</taxon>
        <taxon>Dikarya</taxon>
        <taxon>Ascomycota</taxon>
        <taxon>Saccharomycotina</taxon>
        <taxon>Saccharomycetes</taxon>
        <taxon>Saccharomycetales</taxon>
        <taxon>Saccharomycetaceae</taxon>
        <taxon>Saccharomyces</taxon>
    </lineage>
</organism>
<proteinExistence type="evidence at protein level"/>
<feature type="chain" id="PRO_0000131111" description="Large ribosomal subunit protein uL6A">
    <location>
        <begin position="1"/>
        <end position="191"/>
    </location>
</feature>
<feature type="strand" evidence="11">
    <location>
        <begin position="3"/>
        <end position="11"/>
    </location>
</feature>
<feature type="strand" evidence="11">
    <location>
        <begin position="17"/>
        <end position="21"/>
    </location>
</feature>
<feature type="strand" evidence="11">
    <location>
        <begin position="24"/>
        <end position="29"/>
    </location>
</feature>
<feature type="strand" evidence="11">
    <location>
        <begin position="32"/>
        <end position="37"/>
    </location>
</feature>
<feature type="turn" evidence="10">
    <location>
        <begin position="39"/>
        <end position="41"/>
    </location>
</feature>
<feature type="strand" evidence="11">
    <location>
        <begin position="44"/>
        <end position="49"/>
    </location>
</feature>
<feature type="strand" evidence="11">
    <location>
        <begin position="52"/>
        <end position="60"/>
    </location>
</feature>
<feature type="helix" evidence="11">
    <location>
        <begin position="62"/>
        <end position="83"/>
    </location>
</feature>
<feature type="strand" evidence="11">
    <location>
        <begin position="86"/>
        <end position="93"/>
    </location>
</feature>
<feature type="strand" evidence="11">
    <location>
        <begin position="95"/>
        <end position="97"/>
    </location>
</feature>
<feature type="strand" evidence="11">
    <location>
        <begin position="100"/>
        <end position="104"/>
    </location>
</feature>
<feature type="strand" evidence="11">
    <location>
        <begin position="106"/>
        <end position="108"/>
    </location>
</feature>
<feature type="strand" evidence="11">
    <location>
        <begin position="111"/>
        <end position="115"/>
    </location>
</feature>
<feature type="helix" evidence="11">
    <location>
        <begin position="117"/>
        <end position="119"/>
    </location>
</feature>
<feature type="strand" evidence="11">
    <location>
        <begin position="124"/>
        <end position="127"/>
    </location>
</feature>
<feature type="strand" evidence="11">
    <location>
        <begin position="132"/>
        <end position="136"/>
    </location>
</feature>
<feature type="strand" evidence="11">
    <location>
        <begin position="138"/>
        <end position="140"/>
    </location>
</feature>
<feature type="strand" evidence="11">
    <location>
        <begin position="143"/>
        <end position="149"/>
    </location>
</feature>
<feature type="helix" evidence="11">
    <location>
        <begin position="151"/>
        <end position="163"/>
    </location>
</feature>
<feature type="strand" evidence="9">
    <location>
        <begin position="168"/>
        <end position="170"/>
    </location>
</feature>
<feature type="turn" evidence="11">
    <location>
        <begin position="172"/>
        <end position="174"/>
    </location>
</feature>
<feature type="strand" evidence="11">
    <location>
        <begin position="178"/>
        <end position="189"/>
    </location>
</feature>
<sequence length="191" mass="21569">MKYIQTEQQIEVPEGVTVSIKSRIVKVVGPRGTLTKNLKHIDVTFTKVNNQLIKVAVHNGGRKHVAALRTVKSLVDNMITGVTKGYKYKMRYVYAHFPINVNIVEKDGAKFIEVRNFLGDKKIRNVPVRDGVTIEFSTNVKDEIVLSGNSVEDVSQNAADLQQICRVRNKDIRKFLDGIYVSHKGFITEDL</sequence>
<gene>
    <name evidence="5" type="primary">RPL9A</name>
    <name type="synonym">RPL8A</name>
    <name type="synonym">RPL9</name>
    <name type="ordered locus">YGL147C</name>
</gene>
<accession>P05738</accession>
<accession>D6VU02</accession>
<protein>
    <recommendedName>
        <fullName evidence="4">Large ribosomal subunit protein uL6A</fullName>
    </recommendedName>
    <alternativeName>
        <fullName evidence="5">60S ribosomal protein L9-A</fullName>
    </alternativeName>
    <alternativeName>
        <fullName>L8</fullName>
    </alternativeName>
    <alternativeName>
        <fullName>RP24</fullName>
    </alternativeName>
    <alternativeName>
        <fullName>YL11</fullName>
    </alternativeName>
</protein>